<organism>
    <name type="scientific">Xenopus laevis</name>
    <name type="common">African clawed frog</name>
    <dbReference type="NCBI Taxonomy" id="8355"/>
    <lineage>
        <taxon>Eukaryota</taxon>
        <taxon>Metazoa</taxon>
        <taxon>Chordata</taxon>
        <taxon>Craniata</taxon>
        <taxon>Vertebrata</taxon>
        <taxon>Euteleostomi</taxon>
        <taxon>Amphibia</taxon>
        <taxon>Batrachia</taxon>
        <taxon>Anura</taxon>
        <taxon>Pipoidea</taxon>
        <taxon>Pipidae</taxon>
        <taxon>Xenopodinae</taxon>
        <taxon>Xenopus</taxon>
        <taxon>Xenopus</taxon>
    </lineage>
</organism>
<protein>
    <recommendedName>
        <fullName evidence="1">Inosine triphosphate pyrophosphatase</fullName>
        <shortName evidence="1">ITPase</shortName>
        <shortName evidence="1">Inosine triphosphatase</shortName>
        <ecNumber evidence="1">3.6.1.66</ecNumber>
    </recommendedName>
    <alternativeName>
        <fullName evidence="1">Non-canonical purine NTP pyrophosphatase</fullName>
    </alternativeName>
    <alternativeName>
        <fullName evidence="1">Non-standard purine NTP pyrophosphatase</fullName>
    </alternativeName>
    <alternativeName>
        <fullName evidence="1">Nucleoside-triphosphate diphosphatase</fullName>
    </alternativeName>
    <alternativeName>
        <fullName evidence="1">Nucleoside-triphosphate pyrophosphatase</fullName>
        <shortName evidence="1">NTPase</shortName>
    </alternativeName>
    <alternativeName>
        <fullName evidence="1">XTP/dITP diphosphatase</fullName>
    </alternativeName>
</protein>
<proteinExistence type="evidence at transcript level"/>
<sequence>MAAAAGRSIVFVTGNAKKLEEVVQILGDKFPCKLVAKKIDLPEYQGEPDEISIQKCREAAKQIQGPVIVEDTCLCFNALGGLPGPYIKWFLEKIKPEGLHRMLEGFEDKSAIALCTFAYCNGNPDDTVLLFRGKTLGQIVLPRGPRDFGWDPCFQPDGFQQTYAELPKEVKNTISHRYRALKEMSDYFIQNGTKV</sequence>
<accession>Q2NLA8</accession>
<name>ITPA_XENLA</name>
<reference key="1">
    <citation type="submission" date="2005-12" db="EMBL/GenBank/DDBJ databases">
        <authorList>
            <consortium name="NIH - Xenopus Gene Collection (XGC) project"/>
        </authorList>
    </citation>
    <scope>NUCLEOTIDE SEQUENCE [LARGE SCALE MRNA]</scope>
    <source>
        <tissue>Testis</tissue>
    </source>
</reference>
<dbReference type="EC" id="3.6.1.66" evidence="1"/>
<dbReference type="EMBL" id="BC110771">
    <property type="protein sequence ID" value="AAI10772.1"/>
    <property type="molecule type" value="mRNA"/>
</dbReference>
<dbReference type="RefSeq" id="NP_001089939.1">
    <property type="nucleotide sequence ID" value="NM_001096470.1"/>
</dbReference>
<dbReference type="SMR" id="Q2NLA8"/>
<dbReference type="DNASU" id="735008"/>
<dbReference type="GeneID" id="735008"/>
<dbReference type="KEGG" id="xla:735008"/>
<dbReference type="AGR" id="Xenbase:XB-GENE-1001458"/>
<dbReference type="CTD" id="735008"/>
<dbReference type="Xenbase" id="XB-GENE-1001458">
    <property type="gene designation" value="itpa.S"/>
</dbReference>
<dbReference type="OMA" id="YDPIFQP"/>
<dbReference type="OrthoDB" id="6288734at2759"/>
<dbReference type="Proteomes" id="UP000186698">
    <property type="component" value="Chromosome 4S"/>
</dbReference>
<dbReference type="Bgee" id="735008">
    <property type="expression patterns" value="Expressed in egg cell and 19 other cell types or tissues"/>
</dbReference>
<dbReference type="GO" id="GO:0005737">
    <property type="term" value="C:cytoplasm"/>
    <property type="evidence" value="ECO:0000318"/>
    <property type="project" value="GO_Central"/>
</dbReference>
<dbReference type="GO" id="GO:0035870">
    <property type="term" value="F:dITP diphosphatase activity"/>
    <property type="evidence" value="ECO:0007669"/>
    <property type="project" value="RHEA"/>
</dbReference>
<dbReference type="GO" id="GO:0036220">
    <property type="term" value="F:ITP diphosphatase activity"/>
    <property type="evidence" value="ECO:0007669"/>
    <property type="project" value="RHEA"/>
</dbReference>
<dbReference type="GO" id="GO:0046872">
    <property type="term" value="F:metal ion binding"/>
    <property type="evidence" value="ECO:0007669"/>
    <property type="project" value="UniProtKB-KW"/>
</dbReference>
<dbReference type="GO" id="GO:0047429">
    <property type="term" value="F:nucleoside triphosphate diphosphatase activity"/>
    <property type="evidence" value="ECO:0000318"/>
    <property type="project" value="GO_Central"/>
</dbReference>
<dbReference type="GO" id="GO:0000166">
    <property type="term" value="F:nucleotide binding"/>
    <property type="evidence" value="ECO:0007669"/>
    <property type="project" value="UniProtKB-KW"/>
</dbReference>
<dbReference type="GO" id="GO:0036222">
    <property type="term" value="F:XTP diphosphatase activity"/>
    <property type="evidence" value="ECO:0007669"/>
    <property type="project" value="RHEA"/>
</dbReference>
<dbReference type="GO" id="GO:0009204">
    <property type="term" value="P:deoxyribonucleoside triphosphate catabolic process"/>
    <property type="evidence" value="ECO:0007669"/>
    <property type="project" value="UniProtKB-UniRule"/>
</dbReference>
<dbReference type="GO" id="GO:0009143">
    <property type="term" value="P:nucleoside triphosphate catabolic process"/>
    <property type="evidence" value="ECO:0000318"/>
    <property type="project" value="GO_Central"/>
</dbReference>
<dbReference type="GO" id="GO:0009117">
    <property type="term" value="P:nucleotide metabolic process"/>
    <property type="evidence" value="ECO:0007669"/>
    <property type="project" value="UniProtKB-KW"/>
</dbReference>
<dbReference type="CDD" id="cd00515">
    <property type="entry name" value="HAM1"/>
    <property type="match status" value="1"/>
</dbReference>
<dbReference type="FunFam" id="3.90.950.10:FF:000003">
    <property type="entry name" value="Inosine triphosphate pyrophosphatase"/>
    <property type="match status" value="1"/>
</dbReference>
<dbReference type="Gene3D" id="3.90.950.10">
    <property type="match status" value="1"/>
</dbReference>
<dbReference type="HAMAP" id="MF_03148">
    <property type="entry name" value="HAM1_NTPase"/>
    <property type="match status" value="1"/>
</dbReference>
<dbReference type="InterPro" id="IPR027502">
    <property type="entry name" value="ITPase"/>
</dbReference>
<dbReference type="InterPro" id="IPR029001">
    <property type="entry name" value="ITPase-like_fam"/>
</dbReference>
<dbReference type="InterPro" id="IPR002637">
    <property type="entry name" value="RdgB/HAM1"/>
</dbReference>
<dbReference type="NCBIfam" id="TIGR00042">
    <property type="entry name" value="RdgB/HAM1 family non-canonical purine NTP pyrophosphatase"/>
    <property type="match status" value="1"/>
</dbReference>
<dbReference type="PANTHER" id="PTHR11067:SF9">
    <property type="entry name" value="INOSINE TRIPHOSPHATE PYROPHOSPHATASE"/>
    <property type="match status" value="1"/>
</dbReference>
<dbReference type="PANTHER" id="PTHR11067">
    <property type="entry name" value="INOSINE TRIPHOSPHATE PYROPHOSPHATASE/HAM1 PROTEIN"/>
    <property type="match status" value="1"/>
</dbReference>
<dbReference type="Pfam" id="PF01725">
    <property type="entry name" value="Ham1p_like"/>
    <property type="match status" value="1"/>
</dbReference>
<dbReference type="SUPFAM" id="SSF52972">
    <property type="entry name" value="ITPase-like"/>
    <property type="match status" value="1"/>
</dbReference>
<evidence type="ECO:0000255" key="1">
    <source>
        <dbReference type="HAMAP-Rule" id="MF_03148"/>
    </source>
</evidence>
<keyword id="KW-0963">Cytoplasm</keyword>
<keyword id="KW-0378">Hydrolase</keyword>
<keyword id="KW-0460">Magnesium</keyword>
<keyword id="KW-0464">Manganese</keyword>
<keyword id="KW-0479">Metal-binding</keyword>
<keyword id="KW-0546">Nucleotide metabolism</keyword>
<keyword id="KW-0547">Nucleotide-binding</keyword>
<keyword id="KW-1185">Reference proteome</keyword>
<feature type="chain" id="PRO_0000413104" description="Inosine triphosphate pyrophosphatase">
    <location>
        <begin position="1"/>
        <end position="195"/>
    </location>
</feature>
<feature type="binding site" evidence="1">
    <location>
        <begin position="13"/>
        <end position="18"/>
    </location>
    <ligand>
        <name>ITP</name>
        <dbReference type="ChEBI" id="CHEBI:61402"/>
    </ligand>
</feature>
<feature type="binding site" evidence="1">
    <location>
        <position position="43"/>
    </location>
    <ligand>
        <name>Mg(2+)</name>
        <dbReference type="ChEBI" id="CHEBI:18420"/>
    </ligand>
</feature>
<feature type="binding site" evidence="1">
    <location>
        <position position="55"/>
    </location>
    <ligand>
        <name>ITP</name>
        <dbReference type="ChEBI" id="CHEBI:61402"/>
    </ligand>
</feature>
<feature type="binding site" evidence="1">
    <location>
        <begin position="71"/>
        <end position="72"/>
    </location>
    <ligand>
        <name>ITP</name>
        <dbReference type="ChEBI" id="CHEBI:61402"/>
    </ligand>
</feature>
<feature type="binding site" evidence="1">
    <location>
        <position position="88"/>
    </location>
    <ligand>
        <name>ITP</name>
        <dbReference type="ChEBI" id="CHEBI:61402"/>
    </ligand>
</feature>
<feature type="binding site" evidence="1">
    <location>
        <begin position="148"/>
        <end position="151"/>
    </location>
    <ligand>
        <name>ITP</name>
        <dbReference type="ChEBI" id="CHEBI:61402"/>
    </ligand>
</feature>
<feature type="binding site" evidence="1">
    <location>
        <position position="171"/>
    </location>
    <ligand>
        <name>ITP</name>
        <dbReference type="ChEBI" id="CHEBI:61402"/>
    </ligand>
</feature>
<feature type="binding site" evidence="1">
    <location>
        <begin position="176"/>
        <end position="177"/>
    </location>
    <ligand>
        <name>ITP</name>
        <dbReference type="ChEBI" id="CHEBI:61402"/>
    </ligand>
</feature>
<gene>
    <name type="primary">itpa</name>
</gene>
<comment type="function">
    <text evidence="1">Pyrophosphatase that hydrolyzes the non-canonical purine nucleotides inosine triphosphate (ITP), deoxyinosine triphosphate (dITP) as well as 2'-deoxy-N-6-hydroxylaminopurine triphosphate (dHAPTP) and xanthosine 5'-triphosphate (XTP) to their respective monophosphate derivatives. The enzyme does not distinguish between the deoxy- and ribose forms. Probably excludes non-canonical purines from RNA and DNA precursor pools, thus preventing their incorporation into RNA and DNA and avoiding chromosomal lesions.</text>
</comment>
<comment type="catalytic activity">
    <reaction evidence="1">
        <text>ITP + H2O = IMP + diphosphate + H(+)</text>
        <dbReference type="Rhea" id="RHEA:29399"/>
        <dbReference type="ChEBI" id="CHEBI:15377"/>
        <dbReference type="ChEBI" id="CHEBI:15378"/>
        <dbReference type="ChEBI" id="CHEBI:33019"/>
        <dbReference type="ChEBI" id="CHEBI:58053"/>
        <dbReference type="ChEBI" id="CHEBI:61402"/>
        <dbReference type="EC" id="3.6.1.66"/>
    </reaction>
    <physiologicalReaction direction="left-to-right" evidence="1">
        <dbReference type="Rhea" id="RHEA:29400"/>
    </physiologicalReaction>
</comment>
<comment type="catalytic activity">
    <reaction evidence="1">
        <text>dITP + H2O = dIMP + diphosphate + H(+)</text>
        <dbReference type="Rhea" id="RHEA:28342"/>
        <dbReference type="ChEBI" id="CHEBI:15377"/>
        <dbReference type="ChEBI" id="CHEBI:15378"/>
        <dbReference type="ChEBI" id="CHEBI:33019"/>
        <dbReference type="ChEBI" id="CHEBI:61194"/>
        <dbReference type="ChEBI" id="CHEBI:61382"/>
        <dbReference type="EC" id="3.6.1.66"/>
    </reaction>
    <physiologicalReaction direction="left-to-right" evidence="1">
        <dbReference type="Rhea" id="RHEA:28343"/>
    </physiologicalReaction>
</comment>
<comment type="catalytic activity">
    <reaction evidence="1">
        <text>XTP + H2O = XMP + diphosphate + H(+)</text>
        <dbReference type="Rhea" id="RHEA:28610"/>
        <dbReference type="ChEBI" id="CHEBI:15377"/>
        <dbReference type="ChEBI" id="CHEBI:15378"/>
        <dbReference type="ChEBI" id="CHEBI:33019"/>
        <dbReference type="ChEBI" id="CHEBI:57464"/>
        <dbReference type="ChEBI" id="CHEBI:61314"/>
        <dbReference type="EC" id="3.6.1.66"/>
    </reaction>
    <physiologicalReaction direction="left-to-right" evidence="1">
        <dbReference type="Rhea" id="RHEA:28611"/>
    </physiologicalReaction>
</comment>
<comment type="catalytic activity">
    <reaction evidence="1">
        <text>N(6)-hydroxy-dATP + H2O = N(6)-hydroxy-dAMP + diphosphate + H(+)</text>
        <dbReference type="Rhea" id="RHEA:83971"/>
        <dbReference type="ChEBI" id="CHEBI:15377"/>
        <dbReference type="ChEBI" id="CHEBI:15378"/>
        <dbReference type="ChEBI" id="CHEBI:33019"/>
        <dbReference type="ChEBI" id="CHEBI:233529"/>
        <dbReference type="ChEBI" id="CHEBI:233530"/>
    </reaction>
    <physiologicalReaction direction="left-to-right" evidence="1">
        <dbReference type="Rhea" id="RHEA:83972"/>
    </physiologicalReaction>
</comment>
<comment type="cofactor">
    <cofactor evidence="1">
        <name>Mg(2+)</name>
        <dbReference type="ChEBI" id="CHEBI:18420"/>
    </cofactor>
    <cofactor evidence="1">
        <name>Mn(2+)</name>
        <dbReference type="ChEBI" id="CHEBI:29035"/>
    </cofactor>
    <text evidence="1">Binds 1 divalent metal cation per subunit; can use either Mg(2+) or Mn(2+).</text>
</comment>
<comment type="subunit">
    <text evidence="1">Homodimer.</text>
</comment>
<comment type="subcellular location">
    <subcellularLocation>
        <location evidence="1">Cytoplasm</location>
    </subcellularLocation>
</comment>
<comment type="similarity">
    <text evidence="1">Belongs to the HAM1 NTPase family.</text>
</comment>